<sequence length="377" mass="41633">MTTQFSVAGIELELFRYPASQESNLQAWDAADEHLINTLVEGGQTAVPTAIINDNFGALSCALSRLTPDWPLNVETDARTSFLGAEQNHLRNQLPMDNLTWFTSRDALPGDLALVLMKLPKNLTYFAHQLMRLSQVLPAGCKVLVGAKAKSINASLLEVFAKYLGPASASLAWKKTRVITCISDGKPRALPKEITWDIPEFNLHISNLSNVFAANKLDIGARIMLDNLPQGDFKTIVDLGCGNGVLGLRAAQLYPNANIHFIDDSEMAVASAKANWANNQLPAEKGHFHWDDCMTHLPDGVEPDLVLCNPPFHQGEAITDHIAWQMFLDARRRLKNGGILHIVGNRHLAYHVKLQRLFKNCTTVASNGKFVILQAQR</sequence>
<protein>
    <recommendedName>
        <fullName evidence="1">Ribosomal RNA large subunit methyltransferase G</fullName>
        <ecNumber evidence="1">2.1.1.174</ecNumber>
    </recommendedName>
    <alternativeName>
        <fullName evidence="1">23S rRNA m2G1835 methyltransferase</fullName>
    </alternativeName>
    <alternativeName>
        <fullName evidence="1">rRNA (guanine-N(2)-)-methyltransferase RlmG</fullName>
    </alternativeName>
</protein>
<evidence type="ECO:0000255" key="1">
    <source>
        <dbReference type="HAMAP-Rule" id="MF_01859"/>
    </source>
</evidence>
<accession>Q0HLQ7</accession>
<organism>
    <name type="scientific">Shewanella sp. (strain MR-4)</name>
    <dbReference type="NCBI Taxonomy" id="60480"/>
    <lineage>
        <taxon>Bacteria</taxon>
        <taxon>Pseudomonadati</taxon>
        <taxon>Pseudomonadota</taxon>
        <taxon>Gammaproteobacteria</taxon>
        <taxon>Alteromonadales</taxon>
        <taxon>Shewanellaceae</taxon>
        <taxon>Shewanella</taxon>
    </lineage>
</organism>
<feature type="chain" id="PRO_0000366517" description="Ribosomal RNA large subunit methyltransferase G">
    <location>
        <begin position="1"/>
        <end position="377"/>
    </location>
</feature>
<keyword id="KW-0963">Cytoplasm</keyword>
<keyword id="KW-0489">Methyltransferase</keyword>
<keyword id="KW-0698">rRNA processing</keyword>
<keyword id="KW-0949">S-adenosyl-L-methionine</keyword>
<keyword id="KW-0808">Transferase</keyword>
<dbReference type="EC" id="2.1.1.174" evidence="1"/>
<dbReference type="EMBL" id="CP000446">
    <property type="protein sequence ID" value="ABI38010.1"/>
    <property type="molecule type" value="Genomic_DNA"/>
</dbReference>
<dbReference type="RefSeq" id="WP_011621724.1">
    <property type="nucleotide sequence ID" value="NC_008321.1"/>
</dbReference>
<dbReference type="SMR" id="Q0HLQ7"/>
<dbReference type="KEGG" id="she:Shewmr4_0930"/>
<dbReference type="HOGENOM" id="CLU_040288_4_0_6"/>
<dbReference type="GO" id="GO:0005737">
    <property type="term" value="C:cytoplasm"/>
    <property type="evidence" value="ECO:0007669"/>
    <property type="project" value="UniProtKB-SubCell"/>
</dbReference>
<dbReference type="GO" id="GO:0052916">
    <property type="term" value="F:23S rRNA (guanine(1835)-N(2))-methyltransferase activity"/>
    <property type="evidence" value="ECO:0007669"/>
    <property type="project" value="UniProtKB-EC"/>
</dbReference>
<dbReference type="GO" id="GO:0003676">
    <property type="term" value="F:nucleic acid binding"/>
    <property type="evidence" value="ECO:0007669"/>
    <property type="project" value="InterPro"/>
</dbReference>
<dbReference type="CDD" id="cd02440">
    <property type="entry name" value="AdoMet_MTases"/>
    <property type="match status" value="1"/>
</dbReference>
<dbReference type="Gene3D" id="3.40.50.150">
    <property type="entry name" value="Vaccinia Virus protein VP39"/>
    <property type="match status" value="2"/>
</dbReference>
<dbReference type="HAMAP" id="MF_01859">
    <property type="entry name" value="23SrRNA_methyltr_G"/>
    <property type="match status" value="1"/>
</dbReference>
<dbReference type="InterPro" id="IPR002052">
    <property type="entry name" value="DNA_methylase_N6_adenine_CS"/>
</dbReference>
<dbReference type="InterPro" id="IPR017237">
    <property type="entry name" value="rRNA_m2G-MeTrfase_RlmG"/>
</dbReference>
<dbReference type="InterPro" id="IPR046977">
    <property type="entry name" value="RsmC/RlmG"/>
</dbReference>
<dbReference type="InterPro" id="IPR029063">
    <property type="entry name" value="SAM-dependent_MTases_sf"/>
</dbReference>
<dbReference type="InterPro" id="IPR007848">
    <property type="entry name" value="Small_mtfrase_dom"/>
</dbReference>
<dbReference type="PANTHER" id="PTHR47816:SF5">
    <property type="entry name" value="RIBOSOMAL RNA LARGE SUBUNIT METHYLTRANSFERASE G"/>
    <property type="match status" value="1"/>
</dbReference>
<dbReference type="PANTHER" id="PTHR47816">
    <property type="entry name" value="RIBOSOMAL RNA SMALL SUBUNIT METHYLTRANSFERASE C"/>
    <property type="match status" value="1"/>
</dbReference>
<dbReference type="Pfam" id="PF05175">
    <property type="entry name" value="MTS"/>
    <property type="match status" value="1"/>
</dbReference>
<dbReference type="PIRSF" id="PIRSF037565">
    <property type="entry name" value="RRNA_m2G_Mtase_RsmD_prd"/>
    <property type="match status" value="1"/>
</dbReference>
<dbReference type="SUPFAM" id="SSF53335">
    <property type="entry name" value="S-adenosyl-L-methionine-dependent methyltransferases"/>
    <property type="match status" value="1"/>
</dbReference>
<proteinExistence type="inferred from homology"/>
<reference key="1">
    <citation type="submission" date="2006-08" db="EMBL/GenBank/DDBJ databases">
        <title>Complete sequence of Shewanella sp. MR-4.</title>
        <authorList>
            <consortium name="US DOE Joint Genome Institute"/>
            <person name="Copeland A."/>
            <person name="Lucas S."/>
            <person name="Lapidus A."/>
            <person name="Barry K."/>
            <person name="Detter J.C."/>
            <person name="Glavina del Rio T."/>
            <person name="Hammon N."/>
            <person name="Israni S."/>
            <person name="Dalin E."/>
            <person name="Tice H."/>
            <person name="Pitluck S."/>
            <person name="Kiss H."/>
            <person name="Brettin T."/>
            <person name="Bruce D."/>
            <person name="Han C."/>
            <person name="Tapia R."/>
            <person name="Gilna P."/>
            <person name="Schmutz J."/>
            <person name="Larimer F."/>
            <person name="Land M."/>
            <person name="Hauser L."/>
            <person name="Kyrpides N."/>
            <person name="Mikhailova N."/>
            <person name="Nealson K."/>
            <person name="Konstantinidis K."/>
            <person name="Klappenbach J."/>
            <person name="Tiedje J."/>
            <person name="Richardson P."/>
        </authorList>
    </citation>
    <scope>NUCLEOTIDE SEQUENCE [LARGE SCALE GENOMIC DNA]</scope>
    <source>
        <strain>MR-4</strain>
    </source>
</reference>
<comment type="function">
    <text evidence="1">Specifically methylates the guanine in position 1835 (m2G1835) of 23S rRNA.</text>
</comment>
<comment type="catalytic activity">
    <reaction evidence="1">
        <text>guanosine(1835) in 23S rRNA + S-adenosyl-L-methionine = N(2)-methylguanosine(1835) in 23S rRNA + S-adenosyl-L-homocysteine + H(+)</text>
        <dbReference type="Rhea" id="RHEA:42744"/>
        <dbReference type="Rhea" id="RHEA-COMP:10217"/>
        <dbReference type="Rhea" id="RHEA-COMP:10218"/>
        <dbReference type="ChEBI" id="CHEBI:15378"/>
        <dbReference type="ChEBI" id="CHEBI:57856"/>
        <dbReference type="ChEBI" id="CHEBI:59789"/>
        <dbReference type="ChEBI" id="CHEBI:74269"/>
        <dbReference type="ChEBI" id="CHEBI:74481"/>
        <dbReference type="EC" id="2.1.1.174"/>
    </reaction>
</comment>
<comment type="subcellular location">
    <subcellularLocation>
        <location evidence="1">Cytoplasm</location>
    </subcellularLocation>
</comment>
<comment type="similarity">
    <text evidence="1">Belongs to the methyltransferase superfamily. RlmG family.</text>
</comment>
<gene>
    <name evidence="1" type="primary">rlmG</name>
    <name type="ordered locus">Shewmr4_0930</name>
</gene>
<name>RLMG_SHESM</name>